<feature type="chain" id="PRO_0000100034" description="Dehydrin Rab18">
    <location>
        <begin position="1"/>
        <end position="186"/>
    </location>
</feature>
<feature type="region of interest" description="Disordered" evidence="1">
    <location>
        <begin position="1"/>
        <end position="186"/>
    </location>
</feature>
<feature type="compositionally biased region" description="Gly residues" evidence="1">
    <location>
        <begin position="30"/>
        <end position="85"/>
    </location>
</feature>
<feature type="compositionally biased region" description="Basic and acidic residues" evidence="1">
    <location>
        <begin position="89"/>
        <end position="98"/>
    </location>
</feature>
<feature type="compositionally biased region" description="Low complexity" evidence="1">
    <location>
        <begin position="105"/>
        <end position="116"/>
    </location>
</feature>
<feature type="compositionally biased region" description="Basic and acidic residues" evidence="1">
    <location>
        <begin position="133"/>
        <end position="144"/>
    </location>
</feature>
<feature type="compositionally biased region" description="Gly residues" evidence="1">
    <location>
        <begin position="152"/>
        <end position="164"/>
    </location>
</feature>
<feature type="compositionally biased region" description="Basic and acidic residues" evidence="1">
    <location>
        <begin position="165"/>
        <end position="186"/>
    </location>
</feature>
<feature type="sequence conflict" description="In Ref. 2; AAA32722." evidence="2" ref="2">
    <original>S</original>
    <variation>C</variation>
    <location>
        <position position="145"/>
    </location>
</feature>
<protein>
    <recommendedName>
        <fullName>Dehydrin Rab18</fullName>
    </recommendedName>
</protein>
<dbReference type="EMBL" id="X68042">
    <property type="protein sequence ID" value="CAA48178.1"/>
    <property type="molecule type" value="Genomic_DNA"/>
</dbReference>
<dbReference type="EMBL" id="L04173">
    <property type="protein sequence ID" value="AAA32722.1"/>
    <property type="molecule type" value="Genomic_DNA"/>
</dbReference>
<dbReference type="EMBL" id="AB013389">
    <property type="protein sequence ID" value="BAB10916.1"/>
    <property type="molecule type" value="Genomic_DNA"/>
</dbReference>
<dbReference type="EMBL" id="CP002688">
    <property type="protein sequence ID" value="AED98208.1"/>
    <property type="molecule type" value="Genomic_DNA"/>
</dbReference>
<dbReference type="EMBL" id="AF428458">
    <property type="protein sequence ID" value="AAL16227.1"/>
    <property type="molecule type" value="mRNA"/>
</dbReference>
<dbReference type="EMBL" id="AY093779">
    <property type="protein sequence ID" value="AAM10396.1"/>
    <property type="molecule type" value="mRNA"/>
</dbReference>
<dbReference type="EMBL" id="BT002226">
    <property type="protein sequence ID" value="AAN72237.1"/>
    <property type="molecule type" value="mRNA"/>
</dbReference>
<dbReference type="PIR" id="S28021">
    <property type="entry name" value="S28021"/>
</dbReference>
<dbReference type="RefSeq" id="NP_201441.1">
    <molecule id="P30185-1"/>
    <property type="nucleotide sequence ID" value="NM_126038.3"/>
</dbReference>
<dbReference type="FunCoup" id="P30185">
    <property type="interactions" value="1"/>
</dbReference>
<dbReference type="STRING" id="3702.P30185"/>
<dbReference type="iPTMnet" id="P30185"/>
<dbReference type="PaxDb" id="3702-AT5G66400.1"/>
<dbReference type="ProteomicsDB" id="224217">
    <molecule id="P30185-1"/>
</dbReference>
<dbReference type="EnsemblPlants" id="AT5G66400.1">
    <molecule id="P30185-1"/>
    <property type="protein sequence ID" value="AT5G66400.1"/>
    <property type="gene ID" value="AT5G66400"/>
</dbReference>
<dbReference type="GeneID" id="836772"/>
<dbReference type="Gramene" id="AT5G66400.1">
    <molecule id="P30185-1"/>
    <property type="protein sequence ID" value="AT5G66400.1"/>
    <property type="gene ID" value="AT5G66400"/>
</dbReference>
<dbReference type="KEGG" id="ath:AT5G66400"/>
<dbReference type="Araport" id="AT5G66400"/>
<dbReference type="TAIR" id="AT5G66400">
    <property type="gene designation" value="RAB18"/>
</dbReference>
<dbReference type="eggNOG" id="ENOG502S4VW">
    <property type="taxonomic scope" value="Eukaryota"/>
</dbReference>
<dbReference type="HOGENOM" id="CLU_060028_1_0_1"/>
<dbReference type="InParanoid" id="P30185"/>
<dbReference type="PRO" id="PR:P30185"/>
<dbReference type="Proteomes" id="UP000006548">
    <property type="component" value="Chromosome 5"/>
</dbReference>
<dbReference type="ExpressionAtlas" id="P30185">
    <property type="expression patterns" value="baseline and differential"/>
</dbReference>
<dbReference type="GO" id="GO:0005829">
    <property type="term" value="C:cytosol"/>
    <property type="evidence" value="ECO:0007005"/>
    <property type="project" value="TAIR"/>
</dbReference>
<dbReference type="GO" id="GO:0005507">
    <property type="term" value="F:copper ion binding"/>
    <property type="evidence" value="ECO:0000314"/>
    <property type="project" value="CAFA"/>
</dbReference>
<dbReference type="GO" id="GO:0046872">
    <property type="term" value="F:metal ion binding"/>
    <property type="evidence" value="ECO:0000353"/>
    <property type="project" value="DisProt"/>
</dbReference>
<dbReference type="GO" id="GO:0016151">
    <property type="term" value="F:nickel cation binding"/>
    <property type="evidence" value="ECO:0000314"/>
    <property type="project" value="CAFA"/>
</dbReference>
<dbReference type="GO" id="GO:0009631">
    <property type="term" value="P:cold acclimation"/>
    <property type="evidence" value="ECO:0000316"/>
    <property type="project" value="TAIR"/>
</dbReference>
<dbReference type="GO" id="GO:0009961">
    <property type="term" value="P:response to 1-aminocyclopropane-1-carboxylic acid"/>
    <property type="evidence" value="ECO:0000270"/>
    <property type="project" value="TAIR"/>
</dbReference>
<dbReference type="GO" id="GO:0009737">
    <property type="term" value="P:response to abscisic acid"/>
    <property type="evidence" value="ECO:0000270"/>
    <property type="project" value="TAIR"/>
</dbReference>
<dbReference type="GO" id="GO:0009414">
    <property type="term" value="P:response to water deprivation"/>
    <property type="evidence" value="ECO:0000270"/>
    <property type="project" value="TAIR"/>
</dbReference>
<dbReference type="DisProt" id="DP00689"/>
<dbReference type="InterPro" id="IPR000167">
    <property type="entry name" value="Dehydrin"/>
</dbReference>
<dbReference type="InterPro" id="IPR030513">
    <property type="entry name" value="Dehydrin_CS"/>
</dbReference>
<dbReference type="PANTHER" id="PTHR33346:SF55">
    <property type="entry name" value="DEHYDRIN RAB18"/>
    <property type="match status" value="1"/>
</dbReference>
<dbReference type="PANTHER" id="PTHR33346">
    <property type="entry name" value="DEHYDRIN XERO 2-RELATED"/>
    <property type="match status" value="1"/>
</dbReference>
<dbReference type="Pfam" id="PF00257">
    <property type="entry name" value="Dehydrin"/>
    <property type="match status" value="1"/>
</dbReference>
<dbReference type="PROSITE" id="PS00315">
    <property type="entry name" value="DEHYDRIN_1"/>
    <property type="match status" value="1"/>
</dbReference>
<dbReference type="PROSITE" id="PS00823">
    <property type="entry name" value="DEHYDRIN_2"/>
    <property type="match status" value="2"/>
</dbReference>
<accession>P30185</accession>
<evidence type="ECO:0000256" key="1">
    <source>
        <dbReference type="SAM" id="MobiDB-lite"/>
    </source>
</evidence>
<evidence type="ECO:0000305" key="2"/>
<name>DHR18_ARATH</name>
<sequence length="186" mass="18464">MASYQNRPGGQATDEYGNPIQQQYDEYGNPMGGGGYGTGGGGGATGGQGYGTGGQGYGSGGQGYGTGGQGYGTGTGTEGFGTGGGARHHGQEQLHKESGGGLGGMLHRSGSGSSSSSEDDGQGGRRKKGITQKIKEKLPGHHDQSGQAQAMGGMGSGYDAGGYGGEHHEKKGMMDKIKEKLPGGGR</sequence>
<comment type="alternative products">
    <event type="alternative splicing"/>
    <isoform>
        <id>P30185-1</id>
        <name>1</name>
        <sequence type="displayed"/>
    </isoform>
    <text>A number of isoforms are produced. According to EST sequences.</text>
</comment>
<comment type="induction">
    <text>By water stress and abscisic acid (ABA) during the cold acclimation process.</text>
</comment>
<comment type="similarity">
    <text evidence="2">Belongs to the plant dehydrin family.</text>
</comment>
<proteinExistence type="evidence at transcript level"/>
<organism>
    <name type="scientific">Arabidopsis thaliana</name>
    <name type="common">Mouse-ear cress</name>
    <dbReference type="NCBI Taxonomy" id="3702"/>
    <lineage>
        <taxon>Eukaryota</taxon>
        <taxon>Viridiplantae</taxon>
        <taxon>Streptophyta</taxon>
        <taxon>Embryophyta</taxon>
        <taxon>Tracheophyta</taxon>
        <taxon>Spermatophyta</taxon>
        <taxon>Magnoliopsida</taxon>
        <taxon>eudicotyledons</taxon>
        <taxon>Gunneridae</taxon>
        <taxon>Pentapetalae</taxon>
        <taxon>rosids</taxon>
        <taxon>malvids</taxon>
        <taxon>Brassicales</taxon>
        <taxon>Brassicaceae</taxon>
        <taxon>Camelineae</taxon>
        <taxon>Arabidopsis</taxon>
    </lineage>
</organism>
<reference key="1">
    <citation type="journal article" date="1992" name="Plant Mol. Biol.">
        <title>The expression of a rab-related gene, rab18, is induced by abscisic acid during the cold acclimation process of Arabidopsis thaliana (L.) Heynh.</title>
        <authorList>
            <person name="Lang V."/>
            <person name="Palva E.T."/>
        </authorList>
    </citation>
    <scope>NUCLEOTIDE SEQUENCE [GENOMIC DNA]</scope>
    <source>
        <strain>cv. Columbia</strain>
        <tissue>Leaf</tissue>
    </source>
</reference>
<reference key="2">
    <citation type="submission" date="1992-10" db="EMBL/GenBank/DDBJ databases">
        <title>Sequence analysis of a novel dehydration-induced gene encoding a glycine-rich protein from Arabidopsis thaliana.</title>
        <authorList>
            <person name="Carpenter C.D."/>
            <person name="Simon A.E."/>
        </authorList>
    </citation>
    <scope>NUCLEOTIDE SEQUENCE [GENOMIC DNA]</scope>
</reference>
<reference key="3">
    <citation type="journal article" date="1998" name="DNA Res.">
        <title>Structural analysis of Arabidopsis thaliana chromosome 5. VI. Sequence features of the regions of 1,367,185 bp covered by 19 physically assigned P1 and TAC clones.</title>
        <authorList>
            <person name="Kotani H."/>
            <person name="Nakamura Y."/>
            <person name="Sato S."/>
            <person name="Asamizu E."/>
            <person name="Kaneko T."/>
            <person name="Miyajima N."/>
            <person name="Tabata S."/>
        </authorList>
    </citation>
    <scope>NUCLEOTIDE SEQUENCE [LARGE SCALE GENOMIC DNA]</scope>
    <source>
        <strain>cv. Columbia</strain>
    </source>
</reference>
<reference key="4">
    <citation type="journal article" date="2017" name="Plant J.">
        <title>Araport11: a complete reannotation of the Arabidopsis thaliana reference genome.</title>
        <authorList>
            <person name="Cheng C.Y."/>
            <person name="Krishnakumar V."/>
            <person name="Chan A.P."/>
            <person name="Thibaud-Nissen F."/>
            <person name="Schobel S."/>
            <person name="Town C.D."/>
        </authorList>
    </citation>
    <scope>GENOME REANNOTATION</scope>
    <source>
        <strain>cv. Columbia</strain>
    </source>
</reference>
<reference key="5">
    <citation type="journal article" date="2003" name="Science">
        <title>Empirical analysis of transcriptional activity in the Arabidopsis genome.</title>
        <authorList>
            <person name="Yamada K."/>
            <person name="Lim J."/>
            <person name="Dale J.M."/>
            <person name="Chen H."/>
            <person name="Shinn P."/>
            <person name="Palm C.J."/>
            <person name="Southwick A.M."/>
            <person name="Wu H.C."/>
            <person name="Kim C.J."/>
            <person name="Nguyen M."/>
            <person name="Pham P.K."/>
            <person name="Cheuk R.F."/>
            <person name="Karlin-Newmann G."/>
            <person name="Liu S.X."/>
            <person name="Lam B."/>
            <person name="Sakano H."/>
            <person name="Wu T."/>
            <person name="Yu G."/>
            <person name="Miranda M."/>
            <person name="Quach H.L."/>
            <person name="Tripp M."/>
            <person name="Chang C.H."/>
            <person name="Lee J.M."/>
            <person name="Toriumi M.J."/>
            <person name="Chan M.M."/>
            <person name="Tang C.C."/>
            <person name="Onodera C.S."/>
            <person name="Deng J.M."/>
            <person name="Akiyama K."/>
            <person name="Ansari Y."/>
            <person name="Arakawa T."/>
            <person name="Banh J."/>
            <person name="Banno F."/>
            <person name="Bowser L."/>
            <person name="Brooks S.Y."/>
            <person name="Carninci P."/>
            <person name="Chao Q."/>
            <person name="Choy N."/>
            <person name="Enju A."/>
            <person name="Goldsmith A.D."/>
            <person name="Gurjal M."/>
            <person name="Hansen N.F."/>
            <person name="Hayashizaki Y."/>
            <person name="Johnson-Hopson C."/>
            <person name="Hsuan V.W."/>
            <person name="Iida K."/>
            <person name="Karnes M."/>
            <person name="Khan S."/>
            <person name="Koesema E."/>
            <person name="Ishida J."/>
            <person name="Jiang P.X."/>
            <person name="Jones T."/>
            <person name="Kawai J."/>
            <person name="Kamiya A."/>
            <person name="Meyers C."/>
            <person name="Nakajima M."/>
            <person name="Narusaka M."/>
            <person name="Seki M."/>
            <person name="Sakurai T."/>
            <person name="Satou M."/>
            <person name="Tamse R."/>
            <person name="Vaysberg M."/>
            <person name="Wallender E.K."/>
            <person name="Wong C."/>
            <person name="Yamamura Y."/>
            <person name="Yuan S."/>
            <person name="Shinozaki K."/>
            <person name="Davis R.W."/>
            <person name="Theologis A."/>
            <person name="Ecker J.R."/>
        </authorList>
    </citation>
    <scope>NUCLEOTIDE SEQUENCE [LARGE SCALE MRNA]</scope>
    <source>
        <strain>cv. Columbia</strain>
    </source>
</reference>
<gene>
    <name type="primary">RAB18</name>
    <name type="ordered locus">At5g66400</name>
    <name type="ORF">K1F13.5</name>
</gene>
<keyword id="KW-0025">Alternative splicing</keyword>
<keyword id="KW-1185">Reference proteome</keyword>
<keyword id="KW-0346">Stress response</keyword>